<name>RPOC2_PORPU</name>
<dbReference type="EC" id="2.7.7.6" evidence="1"/>
<dbReference type="EMBL" id="U38804">
    <property type="protein sequence ID" value="AAC08136.1"/>
    <property type="molecule type" value="Genomic_DNA"/>
</dbReference>
<dbReference type="PIR" id="S73171">
    <property type="entry name" value="S73171"/>
</dbReference>
<dbReference type="RefSeq" id="NP_053860.1">
    <property type="nucleotide sequence ID" value="NC_000925.1"/>
</dbReference>
<dbReference type="SMR" id="P51250"/>
<dbReference type="GeneID" id="809879"/>
<dbReference type="GO" id="GO:0009507">
    <property type="term" value="C:chloroplast"/>
    <property type="evidence" value="ECO:0007669"/>
    <property type="project" value="UniProtKB-SubCell"/>
</dbReference>
<dbReference type="GO" id="GO:0000428">
    <property type="term" value="C:DNA-directed RNA polymerase complex"/>
    <property type="evidence" value="ECO:0007669"/>
    <property type="project" value="UniProtKB-KW"/>
</dbReference>
<dbReference type="GO" id="GO:0005739">
    <property type="term" value="C:mitochondrion"/>
    <property type="evidence" value="ECO:0007669"/>
    <property type="project" value="GOC"/>
</dbReference>
<dbReference type="GO" id="GO:0003677">
    <property type="term" value="F:DNA binding"/>
    <property type="evidence" value="ECO:0007669"/>
    <property type="project" value="UniProtKB-UniRule"/>
</dbReference>
<dbReference type="GO" id="GO:0003899">
    <property type="term" value="F:DNA-directed RNA polymerase activity"/>
    <property type="evidence" value="ECO:0007669"/>
    <property type="project" value="UniProtKB-UniRule"/>
</dbReference>
<dbReference type="GO" id="GO:0008270">
    <property type="term" value="F:zinc ion binding"/>
    <property type="evidence" value="ECO:0007669"/>
    <property type="project" value="UniProtKB-UniRule"/>
</dbReference>
<dbReference type="GO" id="GO:0006351">
    <property type="term" value="P:DNA-templated transcription"/>
    <property type="evidence" value="ECO:0007669"/>
    <property type="project" value="UniProtKB-UniRule"/>
</dbReference>
<dbReference type="CDD" id="cd02655">
    <property type="entry name" value="RNAP_beta'_C"/>
    <property type="match status" value="1"/>
</dbReference>
<dbReference type="FunFam" id="1.10.150.390:FF:000002">
    <property type="entry name" value="DNA-directed RNA polymerase subunit beta"/>
    <property type="match status" value="1"/>
</dbReference>
<dbReference type="Gene3D" id="1.10.132.30">
    <property type="match status" value="1"/>
</dbReference>
<dbReference type="Gene3D" id="1.10.150.390">
    <property type="match status" value="1"/>
</dbReference>
<dbReference type="Gene3D" id="1.10.1790.20">
    <property type="match status" value="1"/>
</dbReference>
<dbReference type="Gene3D" id="2.40.50.100">
    <property type="match status" value="1"/>
</dbReference>
<dbReference type="Gene3D" id="1.10.274.100">
    <property type="entry name" value="RNA polymerase Rpb1, domain 3"/>
    <property type="match status" value="1"/>
</dbReference>
<dbReference type="HAMAP" id="MF_01324">
    <property type="entry name" value="RNApol_bact_RpoC2"/>
    <property type="match status" value="1"/>
</dbReference>
<dbReference type="InterPro" id="IPR012756">
    <property type="entry name" value="DNA-dir_RpoC2_beta_pp"/>
</dbReference>
<dbReference type="InterPro" id="IPR045867">
    <property type="entry name" value="DNA-dir_RpoC_beta_prime"/>
</dbReference>
<dbReference type="InterPro" id="IPR007066">
    <property type="entry name" value="RNA_pol_Rpb1_3"/>
</dbReference>
<dbReference type="InterPro" id="IPR042102">
    <property type="entry name" value="RNA_pol_Rpb1_3_sf"/>
</dbReference>
<dbReference type="InterPro" id="IPR007083">
    <property type="entry name" value="RNA_pol_Rpb1_4"/>
</dbReference>
<dbReference type="InterPro" id="IPR007081">
    <property type="entry name" value="RNA_pol_Rpb1_5"/>
</dbReference>
<dbReference type="InterPro" id="IPR038120">
    <property type="entry name" value="Rpb1_funnel_sf"/>
</dbReference>
<dbReference type="NCBIfam" id="TIGR02388">
    <property type="entry name" value="rpoC2_cyan"/>
    <property type="match status" value="1"/>
</dbReference>
<dbReference type="PANTHER" id="PTHR19376">
    <property type="entry name" value="DNA-DIRECTED RNA POLYMERASE"/>
    <property type="match status" value="1"/>
</dbReference>
<dbReference type="PANTHER" id="PTHR19376:SF68">
    <property type="entry name" value="DNA-DIRECTED RNA POLYMERASE SUBUNIT BETA"/>
    <property type="match status" value="1"/>
</dbReference>
<dbReference type="Pfam" id="PF04983">
    <property type="entry name" value="RNA_pol_Rpb1_3"/>
    <property type="match status" value="1"/>
</dbReference>
<dbReference type="Pfam" id="PF05000">
    <property type="entry name" value="RNA_pol_Rpb1_4"/>
    <property type="match status" value="1"/>
</dbReference>
<dbReference type="Pfam" id="PF04998">
    <property type="entry name" value="RNA_pol_Rpb1_5"/>
    <property type="match status" value="2"/>
</dbReference>
<dbReference type="SUPFAM" id="SSF64484">
    <property type="entry name" value="beta and beta-prime subunits of DNA dependent RNA-polymerase"/>
    <property type="match status" value="1"/>
</dbReference>
<proteinExistence type="inferred from homology"/>
<evidence type="ECO:0000255" key="1">
    <source>
        <dbReference type="HAMAP-Rule" id="MF_01324"/>
    </source>
</evidence>
<feature type="chain" id="PRO_0000067943" description="DNA-directed RNA polymerase subunit beta''">
    <location>
        <begin position="1"/>
        <end position="1224"/>
    </location>
</feature>
<feature type="binding site" evidence="1">
    <location>
        <position position="223"/>
    </location>
    <ligand>
        <name>Zn(2+)</name>
        <dbReference type="ChEBI" id="CHEBI:29105"/>
    </ligand>
</feature>
<feature type="binding site" evidence="1">
    <location>
        <position position="297"/>
    </location>
    <ligand>
        <name>Zn(2+)</name>
        <dbReference type="ChEBI" id="CHEBI:29105"/>
    </ligand>
</feature>
<feature type="binding site" evidence="1">
    <location>
        <position position="304"/>
    </location>
    <ligand>
        <name>Zn(2+)</name>
        <dbReference type="ChEBI" id="CHEBI:29105"/>
    </ligand>
</feature>
<feature type="binding site" evidence="1">
    <location>
        <position position="307"/>
    </location>
    <ligand>
        <name>Zn(2+)</name>
        <dbReference type="ChEBI" id="CHEBI:29105"/>
    </ligand>
</feature>
<reference key="1">
    <citation type="journal article" date="1995" name="Plant Mol. Biol. Rep.">
        <title>Complete nucleotide sequence of the Porphyra purpurea chloroplast genome.</title>
        <authorList>
            <person name="Reith M.E."/>
            <person name="Munholland J."/>
        </authorList>
    </citation>
    <scope>NUCLEOTIDE SEQUENCE [LARGE SCALE GENOMIC DNA]</scope>
    <source>
        <strain>Avonport</strain>
    </source>
</reference>
<geneLocation type="chloroplast"/>
<protein>
    <recommendedName>
        <fullName evidence="1">DNA-directed RNA polymerase subunit beta''</fullName>
        <ecNumber evidence="1">2.7.7.6</ecNumber>
    </recommendedName>
    <alternativeName>
        <fullName evidence="1">PEP</fullName>
    </alternativeName>
    <alternativeName>
        <fullName evidence="1">Plastid-encoded RNA polymerase subunit beta''</fullName>
        <shortName evidence="1">RNA polymerase subunit beta''</shortName>
    </alternativeName>
</protein>
<sequence>MNSRKSLSQPSFSNKVIDKNQLKNLIVWAFRNYGIARAANMADKLKDLGFHYATQAGISLSLEDLRIPPSKKSLLLSTIEEIKNTENKYRRGEITTVERFQKVIDTWNNASESLKQEVIEYFKETDPLNSVYMMAFSGARGNISQVRQLVGMRGLMADPQGQIIDLPISSNSREGLTVTDYFISSYGARKGLVDTALRTADSGYLTRRLVDVSQDVIIREVDCKTKKGIILEDLVDTQKVLINLEQALAGRVLAENVFHPEKGSLIAHTRQDISPNLAQEIVRAGIKKVLVRSPVTCNSRSSVCQYCYGWNLAHGRLVDLGEAVGIIAAQSIGEPGTQLAMRTFHTGGVFTGELAEQIYSPIDGKLTNLDFLSYMEVRTRHGEQALMTEKPTQVIIESSGKQKSIINLSKGTTLLVDNNEVVSKDQVIAESPRRNRLMIERAQKHVLSDLSGKICFSNLTVEETDNNQYTTRITKTGGLIWVLSGEVYNIPDSANIPVNKADQVNPGTILAQTELINQYSGKVRIYQNTSSSITNIQIITESVTVPACYIRTDVINKKESYILETDKKQRFLFKSFPDQKISDGHIVAELISDTYKTTSGGIIKYLDLNVSKKKTGPEKDAYDILSPGYILWISEETHEINKDSSLLLVNNGDVIESGTELVKNIFSKSSGIIEIIQKDGIVREIIIKPGFIYKLTDFYSIHDKSRGFLRPGETLHGNISTDKLVYWEYIENEQTPYILIRPVIVYSIPEIKSSLIENLTSQKVNQTKLKLVKRTVFRDGERVKSIDGVHLVTTNLVAEINHHDPNLVSAIEFLAKEDSSNCFALGLSTFETLSIKSIDNKVEKEQSQTRIIVSDGEYIQPLTVVASTEIISMSKGFVEEIHVEKNTSRRILLTTSIDNKVFDLHQQNTLVQVGDWIRCGDLISESIISLDSGQITHISQESATLRIARPYLVSNAAILHVDNNALIRKGETLAVLVFDRAKTGDIIQGLPRIEEILEARKKTDVLLNPHDILDASFNLYIECGLALYEAARLSFQEIQLLLVKEVQLVYQSQGVNISDKHIEVIVRQMTSKVKIENGEETGYLPGELVELQKIEQTNKSMTSRNKLNASYRPILLGITQASLNTESFISAASFQETTKVLTEAAISGKLDWLRGLKENVIIGRLIPAGTGFNMYDSHNDVANKKDINKNISTDNSPPSVRDDLDDIILDDRTARNYFNNKTVD</sequence>
<comment type="function">
    <text evidence="1">DNA-dependent RNA polymerase catalyzes the transcription of DNA into RNA using the four ribonucleoside triphosphates as substrates.</text>
</comment>
<comment type="catalytic activity">
    <reaction evidence="1">
        <text>RNA(n) + a ribonucleoside 5'-triphosphate = RNA(n+1) + diphosphate</text>
        <dbReference type="Rhea" id="RHEA:21248"/>
        <dbReference type="Rhea" id="RHEA-COMP:14527"/>
        <dbReference type="Rhea" id="RHEA-COMP:17342"/>
        <dbReference type="ChEBI" id="CHEBI:33019"/>
        <dbReference type="ChEBI" id="CHEBI:61557"/>
        <dbReference type="ChEBI" id="CHEBI:140395"/>
        <dbReference type="EC" id="2.7.7.6"/>
    </reaction>
</comment>
<comment type="cofactor">
    <cofactor evidence="1">
        <name>Zn(2+)</name>
        <dbReference type="ChEBI" id="CHEBI:29105"/>
    </cofactor>
    <text evidence="1">Binds 1 Zn(2+) ion per subunit.</text>
</comment>
<comment type="subunit">
    <text evidence="1">In plastids the minimal PEP RNA polymerase catalytic core is composed of four subunits: alpha, beta, beta', and beta''. When a (nuclear-encoded) sigma factor is associated with the core the holoenzyme is formed, which can initiate transcription.</text>
</comment>
<comment type="subcellular location">
    <subcellularLocation>
        <location evidence="1">Plastid</location>
        <location evidence="1">Chloroplast</location>
    </subcellularLocation>
</comment>
<comment type="similarity">
    <text evidence="1">Belongs to the RNA polymerase beta' chain family. RpoC2 subfamily.</text>
</comment>
<gene>
    <name evidence="1" type="primary">rpoC2</name>
</gene>
<keyword id="KW-0150">Chloroplast</keyword>
<keyword id="KW-0240">DNA-directed RNA polymerase</keyword>
<keyword id="KW-0479">Metal-binding</keyword>
<keyword id="KW-0548">Nucleotidyltransferase</keyword>
<keyword id="KW-0934">Plastid</keyword>
<keyword id="KW-0804">Transcription</keyword>
<keyword id="KW-0808">Transferase</keyword>
<keyword id="KW-0862">Zinc</keyword>
<organism>
    <name type="scientific">Porphyra purpurea</name>
    <name type="common">Red seaweed</name>
    <name type="synonym">Ulva purpurea</name>
    <dbReference type="NCBI Taxonomy" id="2787"/>
    <lineage>
        <taxon>Eukaryota</taxon>
        <taxon>Rhodophyta</taxon>
        <taxon>Bangiophyceae</taxon>
        <taxon>Bangiales</taxon>
        <taxon>Bangiaceae</taxon>
        <taxon>Porphyra</taxon>
    </lineage>
</organism>
<accession>P51250</accession>